<gene>
    <name evidence="1" type="primary">ispG</name>
    <name type="ordered locus">Asuc_2027</name>
</gene>
<protein>
    <recommendedName>
        <fullName evidence="1">4-hydroxy-3-methylbut-2-en-1-yl diphosphate synthase (flavodoxin)</fullName>
        <ecNumber evidence="1">1.17.7.3</ecNumber>
    </recommendedName>
    <alternativeName>
        <fullName evidence="1">1-hydroxy-2-methyl-2-(E)-butenyl 4-diphosphate synthase</fullName>
    </alternativeName>
</protein>
<dbReference type="EC" id="1.17.7.3" evidence="1"/>
<dbReference type="EMBL" id="CP000746">
    <property type="protein sequence ID" value="ABR75373.1"/>
    <property type="molecule type" value="Genomic_DNA"/>
</dbReference>
<dbReference type="RefSeq" id="WP_012073749.1">
    <property type="nucleotide sequence ID" value="NC_009655.1"/>
</dbReference>
<dbReference type="SMR" id="A6VQX6"/>
<dbReference type="STRING" id="339671.Asuc_2027"/>
<dbReference type="KEGG" id="asu:Asuc_2027"/>
<dbReference type="eggNOG" id="COG0821">
    <property type="taxonomic scope" value="Bacteria"/>
</dbReference>
<dbReference type="HOGENOM" id="CLU_042258_0_0_6"/>
<dbReference type="OrthoDB" id="9803214at2"/>
<dbReference type="UniPathway" id="UPA00056">
    <property type="reaction ID" value="UER00096"/>
</dbReference>
<dbReference type="Proteomes" id="UP000001114">
    <property type="component" value="Chromosome"/>
</dbReference>
<dbReference type="GO" id="GO:0051539">
    <property type="term" value="F:4 iron, 4 sulfur cluster binding"/>
    <property type="evidence" value="ECO:0007669"/>
    <property type="project" value="UniProtKB-UniRule"/>
</dbReference>
<dbReference type="GO" id="GO:0046429">
    <property type="term" value="F:4-hydroxy-3-methylbut-2-en-1-yl diphosphate synthase activity (ferredoxin)"/>
    <property type="evidence" value="ECO:0007669"/>
    <property type="project" value="UniProtKB-UniRule"/>
</dbReference>
<dbReference type="GO" id="GO:0141197">
    <property type="term" value="F:4-hydroxy-3-methylbut-2-enyl-diphosphate synthase activity (flavodoxin)"/>
    <property type="evidence" value="ECO:0007669"/>
    <property type="project" value="UniProtKB-EC"/>
</dbReference>
<dbReference type="GO" id="GO:0005506">
    <property type="term" value="F:iron ion binding"/>
    <property type="evidence" value="ECO:0007669"/>
    <property type="project" value="InterPro"/>
</dbReference>
<dbReference type="GO" id="GO:0019288">
    <property type="term" value="P:isopentenyl diphosphate biosynthetic process, methylerythritol 4-phosphate pathway"/>
    <property type="evidence" value="ECO:0007669"/>
    <property type="project" value="UniProtKB-UniRule"/>
</dbReference>
<dbReference type="GO" id="GO:0016114">
    <property type="term" value="P:terpenoid biosynthetic process"/>
    <property type="evidence" value="ECO:0007669"/>
    <property type="project" value="InterPro"/>
</dbReference>
<dbReference type="FunFam" id="3.20.20.20:FF:000001">
    <property type="entry name" value="4-hydroxy-3-methylbut-2-en-1-yl diphosphate synthase (flavodoxin)"/>
    <property type="match status" value="1"/>
</dbReference>
<dbReference type="FunFam" id="3.30.413.10:FF:000002">
    <property type="entry name" value="4-hydroxy-3-methylbut-2-en-1-yl diphosphate synthase (flavodoxin)"/>
    <property type="match status" value="1"/>
</dbReference>
<dbReference type="Gene3D" id="3.20.20.20">
    <property type="entry name" value="Dihydropteroate synthase-like"/>
    <property type="match status" value="1"/>
</dbReference>
<dbReference type="Gene3D" id="3.30.413.10">
    <property type="entry name" value="Sulfite Reductase Hemoprotein, domain 1"/>
    <property type="match status" value="1"/>
</dbReference>
<dbReference type="HAMAP" id="MF_00159">
    <property type="entry name" value="IspG"/>
    <property type="match status" value="1"/>
</dbReference>
<dbReference type="InterPro" id="IPR011005">
    <property type="entry name" value="Dihydropteroate_synth-like_sf"/>
</dbReference>
<dbReference type="InterPro" id="IPR016425">
    <property type="entry name" value="IspG_bac"/>
</dbReference>
<dbReference type="InterPro" id="IPR004588">
    <property type="entry name" value="IspG_bac-typ"/>
</dbReference>
<dbReference type="InterPro" id="IPR045854">
    <property type="entry name" value="NO2/SO3_Rdtase_4Fe4S_sf"/>
</dbReference>
<dbReference type="NCBIfam" id="TIGR00612">
    <property type="entry name" value="ispG_gcpE"/>
    <property type="match status" value="1"/>
</dbReference>
<dbReference type="NCBIfam" id="NF001540">
    <property type="entry name" value="PRK00366.1"/>
    <property type="match status" value="1"/>
</dbReference>
<dbReference type="PANTHER" id="PTHR30454">
    <property type="entry name" value="4-HYDROXY-3-METHYLBUT-2-EN-1-YL DIPHOSPHATE SYNTHASE"/>
    <property type="match status" value="1"/>
</dbReference>
<dbReference type="PANTHER" id="PTHR30454:SF0">
    <property type="entry name" value="4-HYDROXY-3-METHYLBUT-2-EN-1-YL DIPHOSPHATE SYNTHASE (FERREDOXIN), CHLOROPLASTIC"/>
    <property type="match status" value="1"/>
</dbReference>
<dbReference type="Pfam" id="PF04551">
    <property type="entry name" value="GcpE"/>
    <property type="match status" value="1"/>
</dbReference>
<dbReference type="PIRSF" id="PIRSF004640">
    <property type="entry name" value="IspG"/>
    <property type="match status" value="1"/>
</dbReference>
<dbReference type="SUPFAM" id="SSF51717">
    <property type="entry name" value="Dihydropteroate synthetase-like"/>
    <property type="match status" value="1"/>
</dbReference>
<dbReference type="SUPFAM" id="SSF56014">
    <property type="entry name" value="Nitrite and sulphite reductase 4Fe-4S domain-like"/>
    <property type="match status" value="1"/>
</dbReference>
<comment type="function">
    <text evidence="1">Converts 2C-methyl-D-erythritol 2,4-cyclodiphosphate (ME-2,4cPP) into 1-hydroxy-2-methyl-2-(E)-butenyl 4-diphosphate.</text>
</comment>
<comment type="catalytic activity">
    <reaction evidence="1">
        <text>(2E)-4-hydroxy-3-methylbut-2-enyl diphosphate + oxidized [flavodoxin] + H2O + 2 H(+) = 2-C-methyl-D-erythritol 2,4-cyclic diphosphate + reduced [flavodoxin]</text>
        <dbReference type="Rhea" id="RHEA:43604"/>
        <dbReference type="Rhea" id="RHEA-COMP:10622"/>
        <dbReference type="Rhea" id="RHEA-COMP:10623"/>
        <dbReference type="ChEBI" id="CHEBI:15377"/>
        <dbReference type="ChEBI" id="CHEBI:15378"/>
        <dbReference type="ChEBI" id="CHEBI:57618"/>
        <dbReference type="ChEBI" id="CHEBI:58210"/>
        <dbReference type="ChEBI" id="CHEBI:58483"/>
        <dbReference type="ChEBI" id="CHEBI:128753"/>
        <dbReference type="EC" id="1.17.7.3"/>
    </reaction>
</comment>
<comment type="cofactor">
    <cofactor evidence="1">
        <name>[4Fe-4S] cluster</name>
        <dbReference type="ChEBI" id="CHEBI:49883"/>
    </cofactor>
    <text evidence="1">Binds 1 [4Fe-4S] cluster.</text>
</comment>
<comment type="pathway">
    <text evidence="1">Isoprenoid biosynthesis; isopentenyl diphosphate biosynthesis via DXP pathway; isopentenyl diphosphate from 1-deoxy-D-xylulose 5-phosphate: step 5/6.</text>
</comment>
<comment type="similarity">
    <text evidence="1">Belongs to the IspG family.</text>
</comment>
<name>ISPG_ACTSZ</name>
<feature type="chain" id="PRO_1000071535" description="4-hydroxy-3-methylbut-2-en-1-yl diphosphate synthase (flavodoxin)">
    <location>
        <begin position="1"/>
        <end position="371"/>
    </location>
</feature>
<feature type="binding site" evidence="1">
    <location>
        <position position="271"/>
    </location>
    <ligand>
        <name>[4Fe-4S] cluster</name>
        <dbReference type="ChEBI" id="CHEBI:49883"/>
    </ligand>
</feature>
<feature type="binding site" evidence="1">
    <location>
        <position position="274"/>
    </location>
    <ligand>
        <name>[4Fe-4S] cluster</name>
        <dbReference type="ChEBI" id="CHEBI:49883"/>
    </ligand>
</feature>
<feature type="binding site" evidence="1">
    <location>
        <position position="306"/>
    </location>
    <ligand>
        <name>[4Fe-4S] cluster</name>
        <dbReference type="ChEBI" id="CHEBI:49883"/>
    </ligand>
</feature>
<feature type="binding site" evidence="1">
    <location>
        <position position="313"/>
    </location>
    <ligand>
        <name>[4Fe-4S] cluster</name>
        <dbReference type="ChEBI" id="CHEBI:49883"/>
    </ligand>
</feature>
<sequence>MSAFKPTIKRRESTKIYVGNVPVGGDAPIAVQSMTNTRTTDVEATVTQIKALERVGADIIRVSVPTMEAAEAFKLIKQQTKVPLVADIHFDYRIALKVAEYGVDCLRINPGNIGREDRIRAVVDCAKDKNIPIRIGVNAGSLERDLQEKYGEPTPEALLESALRHVEILDRLNFDQFKVSVKASDVFLAVESYRLLAKAIKQPLHLGITEAGGARAGAVKSAVGLGMLLAEGIGDTLRVSLAADPVEEIKVGFDILKSLRIRSRGINFIACPTCSRQEFDVIGTVNELEQRLEDIITPMDVSIIGCVVNGPGEALVSDLGVTGGNKKSGYYLNGERQKERFDNDDIVNQLEARIRSKVAMQENRIEVSPVE</sequence>
<keyword id="KW-0004">4Fe-4S</keyword>
<keyword id="KW-0408">Iron</keyword>
<keyword id="KW-0411">Iron-sulfur</keyword>
<keyword id="KW-0414">Isoprene biosynthesis</keyword>
<keyword id="KW-0479">Metal-binding</keyword>
<keyword id="KW-0560">Oxidoreductase</keyword>
<keyword id="KW-1185">Reference proteome</keyword>
<organism>
    <name type="scientific">Actinobacillus succinogenes (strain ATCC 55618 / DSM 22257 / CCUG 43843 / 130Z)</name>
    <dbReference type="NCBI Taxonomy" id="339671"/>
    <lineage>
        <taxon>Bacteria</taxon>
        <taxon>Pseudomonadati</taxon>
        <taxon>Pseudomonadota</taxon>
        <taxon>Gammaproteobacteria</taxon>
        <taxon>Pasteurellales</taxon>
        <taxon>Pasteurellaceae</taxon>
        <taxon>Actinobacillus</taxon>
    </lineage>
</organism>
<reference key="1">
    <citation type="journal article" date="2010" name="BMC Genomics">
        <title>A genomic perspective on the potential of Actinobacillus succinogenes for industrial succinate production.</title>
        <authorList>
            <person name="McKinlay J.B."/>
            <person name="Laivenieks M."/>
            <person name="Schindler B.D."/>
            <person name="McKinlay A.A."/>
            <person name="Siddaramappa S."/>
            <person name="Challacombe J.F."/>
            <person name="Lowry S.R."/>
            <person name="Clum A."/>
            <person name="Lapidus A.L."/>
            <person name="Burkhart K.B."/>
            <person name="Harkins V."/>
            <person name="Vieille C."/>
        </authorList>
    </citation>
    <scope>NUCLEOTIDE SEQUENCE [LARGE SCALE GENOMIC DNA]</scope>
    <source>
        <strain>ATCC 55618 / DSM 22257 / CCUG 43843 / 130Z</strain>
    </source>
</reference>
<proteinExistence type="inferred from homology"/>
<evidence type="ECO:0000255" key="1">
    <source>
        <dbReference type="HAMAP-Rule" id="MF_00159"/>
    </source>
</evidence>
<accession>A6VQX6</accession>